<evidence type="ECO:0000269" key="1">
    <source>
    </source>
</evidence>
<evidence type="ECO:0000269" key="2">
    <source>
    </source>
</evidence>
<evidence type="ECO:0000269" key="3">
    <source>
    </source>
</evidence>
<evidence type="ECO:0000269" key="4">
    <source>
    </source>
</evidence>
<evidence type="ECO:0000269" key="5">
    <source>
    </source>
</evidence>
<evidence type="ECO:0000305" key="6"/>
<evidence type="ECO:0000305" key="7">
    <source>
    </source>
</evidence>
<evidence type="ECO:0007744" key="8">
    <source>
    </source>
</evidence>
<evidence type="ECO:0007829" key="9">
    <source>
        <dbReference type="PDB" id="9DTR"/>
    </source>
</evidence>
<proteinExistence type="evidence at protein level"/>
<reference key="1">
    <citation type="journal article" date="1995" name="Yeast">
        <title>A 43.5 kb segment of yeast chromosome XIV, which contains MFA2, MEP2, CAP/SRV2, NAM9, FKB1/FPR1/RBP1, MOM22 and CPT1, predicts an adenosine deaminase gene and 14 new open reading frames.</title>
        <authorList>
            <person name="Mallet L."/>
            <person name="Bussereau F."/>
            <person name="Jacquet M."/>
        </authorList>
    </citation>
    <scope>NUCLEOTIDE SEQUENCE [GENOMIC DNA]</scope>
    <source>
        <strain>ATCC 204508 / S288c</strain>
    </source>
</reference>
<reference key="2">
    <citation type="journal article" date="1997" name="Nature">
        <title>The nucleotide sequence of Saccharomyces cerevisiae chromosome XIV and its evolutionary implications.</title>
        <authorList>
            <person name="Philippsen P."/>
            <person name="Kleine K."/>
            <person name="Poehlmann R."/>
            <person name="Duesterhoeft A."/>
            <person name="Hamberg K."/>
            <person name="Hegemann J.H."/>
            <person name="Obermaier B."/>
            <person name="Urrestarazu L.A."/>
            <person name="Aert R."/>
            <person name="Albermann K."/>
            <person name="Altmann R."/>
            <person name="Andre B."/>
            <person name="Baladron V."/>
            <person name="Ballesta J.P.G."/>
            <person name="Becam A.-M."/>
            <person name="Beinhauer J.D."/>
            <person name="Boskovic J."/>
            <person name="Buitrago M.J."/>
            <person name="Bussereau F."/>
            <person name="Coster F."/>
            <person name="Crouzet M."/>
            <person name="D'Angelo M."/>
            <person name="Dal Pero F."/>
            <person name="De Antoni A."/>
            <person name="del Rey F."/>
            <person name="Doignon F."/>
            <person name="Domdey H."/>
            <person name="Dubois E."/>
            <person name="Fiedler T.A."/>
            <person name="Fleig U."/>
            <person name="Floeth M."/>
            <person name="Fritz C."/>
            <person name="Gaillardin C."/>
            <person name="Garcia-Cantalejo J.M."/>
            <person name="Glansdorff N."/>
            <person name="Goffeau A."/>
            <person name="Gueldener U."/>
            <person name="Herbert C.J."/>
            <person name="Heumann K."/>
            <person name="Heuss-Neitzel D."/>
            <person name="Hilbert H."/>
            <person name="Hinni K."/>
            <person name="Iraqui Houssaini I."/>
            <person name="Jacquet M."/>
            <person name="Jimenez A."/>
            <person name="Jonniaux J.-L."/>
            <person name="Karpfinger-Hartl L."/>
            <person name="Lanfranchi G."/>
            <person name="Lepingle A."/>
            <person name="Levesque H."/>
            <person name="Lyck R."/>
            <person name="Maftahi M."/>
            <person name="Mallet L."/>
            <person name="Maurer C.T.C."/>
            <person name="Messenguy F."/>
            <person name="Mewes H.-W."/>
            <person name="Moestl D."/>
            <person name="Nasr F."/>
            <person name="Nicaud J.-M."/>
            <person name="Niedenthal R.K."/>
            <person name="Pandolfo D."/>
            <person name="Pierard A."/>
            <person name="Piravandi E."/>
            <person name="Planta R.J."/>
            <person name="Pohl T.M."/>
            <person name="Purnelle B."/>
            <person name="Rebischung C."/>
            <person name="Remacha M.A."/>
            <person name="Revuelta J.L."/>
            <person name="Rinke M."/>
            <person name="Saiz J.E."/>
            <person name="Sartorello F."/>
            <person name="Scherens B."/>
            <person name="Sen-Gupta M."/>
            <person name="Soler-Mira A."/>
            <person name="Urbanus J.H.M."/>
            <person name="Valle G."/>
            <person name="Van Dyck L."/>
            <person name="Verhasselt P."/>
            <person name="Vierendeels F."/>
            <person name="Vissers S."/>
            <person name="Voet M."/>
            <person name="Volckaert G."/>
            <person name="Wach A."/>
            <person name="Wambutt R."/>
            <person name="Wedler H."/>
            <person name="Zollner A."/>
            <person name="Hani J."/>
        </authorList>
    </citation>
    <scope>NUCLEOTIDE SEQUENCE [LARGE SCALE GENOMIC DNA]</scope>
    <source>
        <strain>ATCC 204508 / S288c</strain>
    </source>
</reference>
<reference key="3">
    <citation type="journal article" date="2014" name="G3 (Bethesda)">
        <title>The reference genome sequence of Saccharomyces cerevisiae: Then and now.</title>
        <authorList>
            <person name="Engel S.R."/>
            <person name="Dietrich F.S."/>
            <person name="Fisk D.G."/>
            <person name="Binkley G."/>
            <person name="Balakrishnan R."/>
            <person name="Costanzo M.C."/>
            <person name="Dwight S.S."/>
            <person name="Hitz B.C."/>
            <person name="Karra K."/>
            <person name="Nash R.S."/>
            <person name="Weng S."/>
            <person name="Wong E.D."/>
            <person name="Lloyd P."/>
            <person name="Skrzypek M.S."/>
            <person name="Miyasato S.R."/>
            <person name="Simison M."/>
            <person name="Cherry J.M."/>
        </authorList>
    </citation>
    <scope>GENOME REANNOTATION</scope>
    <source>
        <strain>ATCC 204508 / S288c</strain>
    </source>
</reference>
<reference key="4">
    <citation type="journal article" date="2007" name="Genome Res.">
        <title>Approaching a complete repository of sequence-verified protein-encoding clones for Saccharomyces cerevisiae.</title>
        <authorList>
            <person name="Hu Y."/>
            <person name="Rolfs A."/>
            <person name="Bhullar B."/>
            <person name="Murthy T.V.S."/>
            <person name="Zhu C."/>
            <person name="Berger M.F."/>
            <person name="Camargo A.A."/>
            <person name="Kelley F."/>
            <person name="McCarron S."/>
            <person name="Jepson D."/>
            <person name="Richardson A."/>
            <person name="Raphael J."/>
            <person name="Moreira D."/>
            <person name="Taycher E."/>
            <person name="Zuo D."/>
            <person name="Mohr S."/>
            <person name="Kane M.F."/>
            <person name="Williamson J."/>
            <person name="Simpson A.J.G."/>
            <person name="Bulyk M.L."/>
            <person name="Harlow E."/>
            <person name="Marsischky G."/>
            <person name="Kolodner R.D."/>
            <person name="LaBaer J."/>
        </authorList>
    </citation>
    <scope>NUCLEOTIDE SEQUENCE [GENOMIC DNA]</scope>
    <source>
        <strain>ATCC 204508 / S288c</strain>
    </source>
</reference>
<reference key="5">
    <citation type="journal article" date="2002" name="Genetics">
        <title>A genomics-based screen for yeast mutants with an altered recombination/end-joining repair ratio.</title>
        <authorList>
            <person name="Wilson T.E."/>
        </authorList>
    </citation>
    <scope>FUNCTION</scope>
</reference>
<reference key="6">
    <citation type="journal article" date="2003" name="Genetics">
        <title>A Saccharomyces cerevisiae genome-wide mutant screen for altered sensitivity to K1 killer toxin.</title>
        <authorList>
            <person name="Page N."/>
            <person name="Gerard-Vincent M."/>
            <person name="Menard P."/>
            <person name="Beaulieu M."/>
            <person name="Azuma M."/>
            <person name="Dijkgraaf G.J.P."/>
            <person name="Li H."/>
            <person name="Marcoux J."/>
            <person name="Nguyen T."/>
            <person name="Dowse T."/>
            <person name="Sdicu A.-M."/>
            <person name="Bussey H."/>
        </authorList>
    </citation>
    <scope>FUNCTION</scope>
</reference>
<reference key="7">
    <citation type="journal article" date="2003" name="Nature">
        <title>Global analysis of protein localization in budding yeast.</title>
        <authorList>
            <person name="Huh W.-K."/>
            <person name="Falvo J.V."/>
            <person name="Gerke L.C."/>
            <person name="Carroll A.S."/>
            <person name="Howson R.W."/>
            <person name="Weissman J.S."/>
            <person name="O'Shea E.K."/>
        </authorList>
    </citation>
    <scope>SUBCELLULAR LOCATION [LARGE SCALE ANALYSIS]</scope>
</reference>
<reference key="8">
    <citation type="journal article" date="2003" name="Nature">
        <title>Global analysis of protein expression in yeast.</title>
        <authorList>
            <person name="Ghaemmaghami S."/>
            <person name="Huh W.-K."/>
            <person name="Bower K."/>
            <person name="Howson R.W."/>
            <person name="Belle A."/>
            <person name="Dephoure N."/>
            <person name="O'Shea E.K."/>
            <person name="Weissman J.S."/>
        </authorList>
    </citation>
    <scope>LEVEL OF PROTEIN EXPRESSION [LARGE SCALE ANALYSIS]</scope>
</reference>
<reference key="9">
    <citation type="journal article" date="2006" name="PLoS Genet.">
        <title>Telomere length as a quantitative trait: genome-wide survey and genetic mapping of telomere length-control genes in yeast.</title>
        <authorList>
            <person name="Gatbonton T."/>
            <person name="Imbesi M."/>
            <person name="Nelson M."/>
            <person name="Akey J.M."/>
            <person name="Ruderfer D.M."/>
            <person name="Kruglyak L."/>
            <person name="Simon J.A."/>
            <person name="Bedalov A."/>
        </authorList>
    </citation>
    <scope>FUNCTION</scope>
</reference>
<reference key="10">
    <citation type="journal article" date="2012" name="Proc. Natl. Acad. Sci. U.S.A.">
        <title>N-terminal acetylome analyses and functional insights of the N-terminal acetyltransferase NatB.</title>
        <authorList>
            <person name="Van Damme P."/>
            <person name="Lasa M."/>
            <person name="Polevoda B."/>
            <person name="Gazquez C."/>
            <person name="Elosegui-Artola A."/>
            <person name="Kim D.S."/>
            <person name="De Juan-Pardo E."/>
            <person name="Demeyer K."/>
            <person name="Hole K."/>
            <person name="Larrea E."/>
            <person name="Timmerman E."/>
            <person name="Prieto J."/>
            <person name="Arnesen T."/>
            <person name="Sherman F."/>
            <person name="Gevaert K."/>
            <person name="Aldabe R."/>
        </authorList>
    </citation>
    <scope>ACETYLATION [LARGE SCALE ANALYSIS] AT SER-2</scope>
    <scope>CLEAVAGE OF INITIATOR METHIONINE [LARGE SCALE ANALYSIS]</scope>
    <scope>IDENTIFICATION BY MASS SPECTROMETRY [LARGE SCALE ANALYSIS]</scope>
</reference>
<protein>
    <recommendedName>
        <fullName>Protein FYV6</fullName>
    </recommendedName>
    <alternativeName>
        <fullName>Function required for yeast viability protein 6</fullName>
    </alternativeName>
</protein>
<organism>
    <name type="scientific">Saccharomyces cerevisiae (strain ATCC 204508 / S288c)</name>
    <name type="common">Baker's yeast</name>
    <dbReference type="NCBI Taxonomy" id="559292"/>
    <lineage>
        <taxon>Eukaryota</taxon>
        <taxon>Fungi</taxon>
        <taxon>Dikarya</taxon>
        <taxon>Ascomycota</taxon>
        <taxon>Saccharomycotina</taxon>
        <taxon>Saccharomycetes</taxon>
        <taxon>Saccharomycetales</taxon>
        <taxon>Saccharomycetaceae</taxon>
        <taxon>Saccharomyces</taxon>
    </lineage>
</organism>
<name>FYV6_YEAST</name>
<comment type="function">
    <text evidence="1 2 5">Involved in telomere length regulation and required for survival upon exposure to K1 killer toxin. Promotes fully efficient non-homologous end-joining (NHEJ) by a mechanism activated in postdiauxic/stationary phase.</text>
</comment>
<comment type="subcellular location">
    <subcellularLocation>
        <location evidence="3">Nucleus</location>
    </subcellularLocation>
    <subcellularLocation>
        <location evidence="7">Chromosome</location>
        <location evidence="7">Telomere</location>
    </subcellularLocation>
</comment>
<comment type="miscellaneous">
    <text evidence="4">Present with 468 molecules/cell in log phase SD medium.</text>
</comment>
<comment type="similarity">
    <text evidence="6">Belongs to the FYV6 family.</text>
</comment>
<sequence>MSSTSDNNANSAREKKPLKFVSEGVGNVEAQRIREQVEQKKYEAEYKRKTRKSLRDQLRSNAISKQKQYNGLVRDRESFTRLSKEDLEFYQKSKNELLKKEKELNNYLDVKAINFEKKKKALLMENDSTTNTEKYLETGTSLGSKTQIKGVKTSSPKPKIKVSIKKLGRKLEN</sequence>
<gene>
    <name type="primary">FYV6</name>
    <name type="ordered locus">YNL133C</name>
    <name type="ORF">N1215</name>
    <name type="ORF">N1850</name>
</gene>
<accession>P53913</accession>
<accession>D6W149</accession>
<feature type="initiator methionine" description="Removed" evidence="8">
    <location>
        <position position="1"/>
    </location>
</feature>
<feature type="chain" id="PRO_0000203427" description="Protein FYV6">
    <location>
        <begin position="2"/>
        <end position="173"/>
    </location>
</feature>
<feature type="modified residue" description="N-acetylserine" evidence="8">
    <location>
        <position position="2"/>
    </location>
</feature>
<feature type="strand" evidence="9">
    <location>
        <begin position="20"/>
        <end position="22"/>
    </location>
</feature>
<feature type="turn" evidence="9">
    <location>
        <begin position="23"/>
        <end position="25"/>
    </location>
</feature>
<feature type="helix" evidence="9">
    <location>
        <begin position="28"/>
        <end position="50"/>
    </location>
</feature>
<feature type="helix" evidence="9">
    <location>
        <begin position="54"/>
        <end position="76"/>
    </location>
</feature>
<feature type="helix" evidence="9">
    <location>
        <begin position="77"/>
        <end position="80"/>
    </location>
</feature>
<feature type="helix" evidence="9">
    <location>
        <begin position="84"/>
        <end position="112"/>
    </location>
</feature>
<feature type="helix" evidence="9">
    <location>
        <begin position="115"/>
        <end position="124"/>
    </location>
</feature>
<keyword id="KW-0002">3D-structure</keyword>
<keyword id="KW-0007">Acetylation</keyword>
<keyword id="KW-0158">Chromosome</keyword>
<keyword id="KW-0539">Nucleus</keyword>
<keyword id="KW-1185">Reference proteome</keyword>
<keyword id="KW-0779">Telomere</keyword>
<dbReference type="EMBL" id="Z46843">
    <property type="protein sequence ID" value="CAA86892.1"/>
    <property type="molecule type" value="Genomic_DNA"/>
</dbReference>
<dbReference type="EMBL" id="Z71409">
    <property type="protein sequence ID" value="CAA96015.1"/>
    <property type="molecule type" value="Genomic_DNA"/>
</dbReference>
<dbReference type="EMBL" id="AY558006">
    <property type="protein sequence ID" value="AAS56332.1"/>
    <property type="molecule type" value="Genomic_DNA"/>
</dbReference>
<dbReference type="EMBL" id="BK006947">
    <property type="protein sequence ID" value="DAA10415.1"/>
    <property type="molecule type" value="Genomic_DNA"/>
</dbReference>
<dbReference type="PIR" id="S55150">
    <property type="entry name" value="S55150"/>
</dbReference>
<dbReference type="RefSeq" id="NP_014266.3">
    <property type="nucleotide sequence ID" value="NM_001182971.3"/>
</dbReference>
<dbReference type="PDB" id="9DTR">
    <property type="method" value="EM"/>
    <property type="resolution" value="2.31 A"/>
    <property type="chains" value="D=1-173"/>
</dbReference>
<dbReference type="PDBsum" id="9DTR"/>
<dbReference type="EMDB" id="EMD-47157"/>
<dbReference type="SMR" id="P53913"/>
<dbReference type="BioGRID" id="35693">
    <property type="interactions" value="22"/>
</dbReference>
<dbReference type="DIP" id="DIP-4564N"/>
<dbReference type="FunCoup" id="P53913">
    <property type="interactions" value="69"/>
</dbReference>
<dbReference type="IntAct" id="P53913">
    <property type="interactions" value="2"/>
</dbReference>
<dbReference type="STRING" id="4932.YNL133C"/>
<dbReference type="iPTMnet" id="P53913"/>
<dbReference type="PaxDb" id="4932-YNL133C"/>
<dbReference type="PeptideAtlas" id="P53913"/>
<dbReference type="EnsemblFungi" id="YNL133C_mRNA">
    <property type="protein sequence ID" value="YNL133C"/>
    <property type="gene ID" value="YNL133C"/>
</dbReference>
<dbReference type="GeneID" id="855589"/>
<dbReference type="KEGG" id="sce:YNL133C"/>
<dbReference type="AGR" id="SGD:S000005077"/>
<dbReference type="SGD" id="S000005077">
    <property type="gene designation" value="FYV6"/>
</dbReference>
<dbReference type="VEuPathDB" id="FungiDB:YNL133C"/>
<dbReference type="eggNOG" id="ENOG502S517">
    <property type="taxonomic scope" value="Eukaryota"/>
</dbReference>
<dbReference type="HOGENOM" id="CLU_128329_0_0_1"/>
<dbReference type="InParanoid" id="P53913"/>
<dbReference type="OMA" id="HEVPENR"/>
<dbReference type="OrthoDB" id="4036151at2759"/>
<dbReference type="BioCyc" id="YEAST:G3O-33153-MONOMER"/>
<dbReference type="BioGRID-ORCS" id="855589">
    <property type="hits" value="0 hits in 10 CRISPR screens"/>
</dbReference>
<dbReference type="PRO" id="PR:P53913"/>
<dbReference type="Proteomes" id="UP000002311">
    <property type="component" value="Chromosome XIV"/>
</dbReference>
<dbReference type="RNAct" id="P53913">
    <property type="molecule type" value="protein"/>
</dbReference>
<dbReference type="GO" id="GO:0000781">
    <property type="term" value="C:chromosome, telomeric region"/>
    <property type="evidence" value="ECO:0007669"/>
    <property type="project" value="UniProtKB-SubCell"/>
</dbReference>
<dbReference type="GO" id="GO:0005634">
    <property type="term" value="C:nucleus"/>
    <property type="evidence" value="ECO:0007005"/>
    <property type="project" value="SGD"/>
</dbReference>
<dbReference type="GO" id="GO:0006303">
    <property type="term" value="P:double-strand break repair via nonhomologous end joining"/>
    <property type="evidence" value="ECO:0000315"/>
    <property type="project" value="SGD"/>
</dbReference>
<dbReference type="InterPro" id="IPR019331">
    <property type="entry name" value="FAM192A/Fyv6_N"/>
</dbReference>
<dbReference type="Pfam" id="PF10187">
    <property type="entry name" value="FAM192A_Fyv6_N"/>
    <property type="match status" value="1"/>
</dbReference>